<organism>
    <name type="scientific">Staphylococcus aureus (strain COL)</name>
    <dbReference type="NCBI Taxonomy" id="93062"/>
    <lineage>
        <taxon>Bacteria</taxon>
        <taxon>Bacillati</taxon>
        <taxon>Bacillota</taxon>
        <taxon>Bacilli</taxon>
        <taxon>Bacillales</taxon>
        <taxon>Staphylococcaceae</taxon>
        <taxon>Staphylococcus</taxon>
    </lineage>
</organism>
<comment type="function">
    <text evidence="1">Catalyzes a salvage reaction resulting in the formation of AMP, that is energically less costly than de novo synthesis.</text>
</comment>
<comment type="catalytic activity">
    <reaction evidence="1">
        <text>AMP + diphosphate = 5-phospho-alpha-D-ribose 1-diphosphate + adenine</text>
        <dbReference type="Rhea" id="RHEA:16609"/>
        <dbReference type="ChEBI" id="CHEBI:16708"/>
        <dbReference type="ChEBI" id="CHEBI:33019"/>
        <dbReference type="ChEBI" id="CHEBI:58017"/>
        <dbReference type="ChEBI" id="CHEBI:456215"/>
        <dbReference type="EC" id="2.4.2.7"/>
    </reaction>
</comment>
<comment type="pathway">
    <text evidence="1">Purine metabolism; AMP biosynthesis via salvage pathway; AMP from adenine: step 1/1.</text>
</comment>
<comment type="subunit">
    <text evidence="1">Homodimer.</text>
</comment>
<comment type="subcellular location">
    <subcellularLocation>
        <location evidence="1">Cytoplasm</location>
    </subcellularLocation>
</comment>
<comment type="similarity">
    <text evidence="1">Belongs to the purine/pyrimidine phosphoribosyltransferase family.</text>
</comment>
<feature type="chain" id="PRO_0000149449" description="Adenine phosphoribosyltransferase">
    <location>
        <begin position="1"/>
        <end position="172"/>
    </location>
</feature>
<reference key="1">
    <citation type="journal article" date="2005" name="J. Bacteriol.">
        <title>Insights on evolution of virulence and resistance from the complete genome analysis of an early methicillin-resistant Staphylococcus aureus strain and a biofilm-producing methicillin-resistant Staphylococcus epidermidis strain.</title>
        <authorList>
            <person name="Gill S.R."/>
            <person name="Fouts D.E."/>
            <person name="Archer G.L."/>
            <person name="Mongodin E.F."/>
            <person name="DeBoy R.T."/>
            <person name="Ravel J."/>
            <person name="Paulsen I.T."/>
            <person name="Kolonay J.F."/>
            <person name="Brinkac L.M."/>
            <person name="Beanan M.J."/>
            <person name="Dodson R.J."/>
            <person name="Daugherty S.C."/>
            <person name="Madupu R."/>
            <person name="Angiuoli S.V."/>
            <person name="Durkin A.S."/>
            <person name="Haft D.H."/>
            <person name="Vamathevan J.J."/>
            <person name="Khouri H."/>
            <person name="Utterback T.R."/>
            <person name="Lee C."/>
            <person name="Dimitrov G."/>
            <person name="Jiang L."/>
            <person name="Qin H."/>
            <person name="Weidman J."/>
            <person name="Tran K."/>
            <person name="Kang K.H."/>
            <person name="Hance I.R."/>
            <person name="Nelson K.E."/>
            <person name="Fraser C.M."/>
        </authorList>
    </citation>
    <scope>NUCLEOTIDE SEQUENCE [LARGE SCALE GENOMIC DNA]</scope>
    <source>
        <strain>COL</strain>
    </source>
</reference>
<gene>
    <name evidence="1" type="primary">apt</name>
    <name type="ordered locus">SACOL1690</name>
</gene>
<dbReference type="EC" id="2.4.2.7" evidence="1"/>
<dbReference type="EMBL" id="CP000046">
    <property type="protein sequence ID" value="AAW36796.1"/>
    <property type="molecule type" value="Genomic_DNA"/>
</dbReference>
<dbReference type="RefSeq" id="WP_000364542.1">
    <property type="nucleotide sequence ID" value="NZ_JBGOFO010000003.1"/>
</dbReference>
<dbReference type="SMR" id="Q5HFC8"/>
<dbReference type="KEGG" id="sac:SACOL1690"/>
<dbReference type="HOGENOM" id="CLU_063339_3_0_9"/>
<dbReference type="UniPathway" id="UPA00588">
    <property type="reaction ID" value="UER00646"/>
</dbReference>
<dbReference type="Proteomes" id="UP000000530">
    <property type="component" value="Chromosome"/>
</dbReference>
<dbReference type="GO" id="GO:0005737">
    <property type="term" value="C:cytoplasm"/>
    <property type="evidence" value="ECO:0007669"/>
    <property type="project" value="UniProtKB-SubCell"/>
</dbReference>
<dbReference type="GO" id="GO:0002055">
    <property type="term" value="F:adenine binding"/>
    <property type="evidence" value="ECO:0007669"/>
    <property type="project" value="TreeGrafter"/>
</dbReference>
<dbReference type="GO" id="GO:0003999">
    <property type="term" value="F:adenine phosphoribosyltransferase activity"/>
    <property type="evidence" value="ECO:0007669"/>
    <property type="project" value="UniProtKB-UniRule"/>
</dbReference>
<dbReference type="GO" id="GO:0016208">
    <property type="term" value="F:AMP binding"/>
    <property type="evidence" value="ECO:0007669"/>
    <property type="project" value="TreeGrafter"/>
</dbReference>
<dbReference type="GO" id="GO:0006168">
    <property type="term" value="P:adenine salvage"/>
    <property type="evidence" value="ECO:0007669"/>
    <property type="project" value="InterPro"/>
</dbReference>
<dbReference type="GO" id="GO:0044209">
    <property type="term" value="P:AMP salvage"/>
    <property type="evidence" value="ECO:0007669"/>
    <property type="project" value="UniProtKB-UniRule"/>
</dbReference>
<dbReference type="GO" id="GO:0006166">
    <property type="term" value="P:purine ribonucleoside salvage"/>
    <property type="evidence" value="ECO:0007669"/>
    <property type="project" value="UniProtKB-KW"/>
</dbReference>
<dbReference type="CDD" id="cd06223">
    <property type="entry name" value="PRTases_typeI"/>
    <property type="match status" value="1"/>
</dbReference>
<dbReference type="FunFam" id="3.40.50.2020:FF:000004">
    <property type="entry name" value="Adenine phosphoribosyltransferase"/>
    <property type="match status" value="1"/>
</dbReference>
<dbReference type="Gene3D" id="3.40.50.2020">
    <property type="match status" value="1"/>
</dbReference>
<dbReference type="HAMAP" id="MF_00004">
    <property type="entry name" value="Aden_phosphoribosyltr"/>
    <property type="match status" value="1"/>
</dbReference>
<dbReference type="InterPro" id="IPR005764">
    <property type="entry name" value="Ade_phspho_trans"/>
</dbReference>
<dbReference type="InterPro" id="IPR000836">
    <property type="entry name" value="PRibTrfase_dom"/>
</dbReference>
<dbReference type="InterPro" id="IPR029057">
    <property type="entry name" value="PRTase-like"/>
</dbReference>
<dbReference type="InterPro" id="IPR050054">
    <property type="entry name" value="UPRTase/APRTase"/>
</dbReference>
<dbReference type="NCBIfam" id="TIGR01090">
    <property type="entry name" value="apt"/>
    <property type="match status" value="1"/>
</dbReference>
<dbReference type="NCBIfam" id="NF002633">
    <property type="entry name" value="PRK02304.1-2"/>
    <property type="match status" value="1"/>
</dbReference>
<dbReference type="NCBIfam" id="NF002634">
    <property type="entry name" value="PRK02304.1-3"/>
    <property type="match status" value="1"/>
</dbReference>
<dbReference type="NCBIfam" id="NF002636">
    <property type="entry name" value="PRK02304.1-5"/>
    <property type="match status" value="1"/>
</dbReference>
<dbReference type="PANTHER" id="PTHR32315">
    <property type="entry name" value="ADENINE PHOSPHORIBOSYLTRANSFERASE"/>
    <property type="match status" value="1"/>
</dbReference>
<dbReference type="PANTHER" id="PTHR32315:SF3">
    <property type="entry name" value="ADENINE PHOSPHORIBOSYLTRANSFERASE"/>
    <property type="match status" value="1"/>
</dbReference>
<dbReference type="Pfam" id="PF00156">
    <property type="entry name" value="Pribosyltran"/>
    <property type="match status" value="1"/>
</dbReference>
<dbReference type="SUPFAM" id="SSF53271">
    <property type="entry name" value="PRTase-like"/>
    <property type="match status" value="1"/>
</dbReference>
<accession>Q5HFC8</accession>
<evidence type="ECO:0000255" key="1">
    <source>
        <dbReference type="HAMAP-Rule" id="MF_00004"/>
    </source>
</evidence>
<sequence length="172" mass="19117">MDLKQYVSEVQDWPKPGVSFKDITTIMDNGEAYGYATDKIVEYAKDRDVDIVVGPEARGFIIGCPVAYSMGIGFAPVRKEGKLPREVIRYEYDLEYGTNVLTMHKDAIKPGQRVLITDDLLATGGTIEAAIKLVEKLGGIVVGIAFIIELKYLNGIEKIKDYDVMSLISYDE</sequence>
<name>APT_STAAC</name>
<proteinExistence type="inferred from homology"/>
<keyword id="KW-0963">Cytoplasm</keyword>
<keyword id="KW-0328">Glycosyltransferase</keyword>
<keyword id="KW-0660">Purine salvage</keyword>
<keyword id="KW-0808">Transferase</keyword>
<protein>
    <recommendedName>
        <fullName evidence="1">Adenine phosphoribosyltransferase</fullName>
        <shortName evidence="1">APRT</shortName>
        <ecNumber evidence="1">2.4.2.7</ecNumber>
    </recommendedName>
</protein>